<gene>
    <name evidence="1" type="primary">lpxC</name>
    <name type="ordered locus">VC_2396</name>
</gene>
<reference key="1">
    <citation type="journal article" date="2000" name="Nature">
        <title>DNA sequence of both chromosomes of the cholera pathogen Vibrio cholerae.</title>
        <authorList>
            <person name="Heidelberg J.F."/>
            <person name="Eisen J.A."/>
            <person name="Nelson W.C."/>
            <person name="Clayton R.A."/>
            <person name="Gwinn M.L."/>
            <person name="Dodson R.J."/>
            <person name="Haft D.H."/>
            <person name="Hickey E.K."/>
            <person name="Peterson J.D."/>
            <person name="Umayam L.A."/>
            <person name="Gill S.R."/>
            <person name="Nelson K.E."/>
            <person name="Read T.D."/>
            <person name="Tettelin H."/>
            <person name="Richardson D.L."/>
            <person name="Ermolaeva M.D."/>
            <person name="Vamathevan J.J."/>
            <person name="Bass S."/>
            <person name="Qin H."/>
            <person name="Dragoi I."/>
            <person name="Sellers P."/>
            <person name="McDonald L.A."/>
            <person name="Utterback T.R."/>
            <person name="Fleischmann R.D."/>
            <person name="Nierman W.C."/>
            <person name="White O."/>
            <person name="Salzberg S.L."/>
            <person name="Smith H.O."/>
            <person name="Colwell R.R."/>
            <person name="Mekalanos J.J."/>
            <person name="Venter J.C."/>
            <person name="Fraser C.M."/>
        </authorList>
    </citation>
    <scope>NUCLEOTIDE SEQUENCE [LARGE SCALE GENOMIC DNA]</scope>
    <source>
        <strain>ATCC 39315 / El Tor Inaba N16961</strain>
    </source>
</reference>
<accession>Q9KPH2</accession>
<dbReference type="EC" id="3.5.1.108" evidence="1"/>
<dbReference type="EMBL" id="AE003852">
    <property type="protein sequence ID" value="AAF95539.1"/>
    <property type="molecule type" value="Genomic_DNA"/>
</dbReference>
<dbReference type="PIR" id="H82080">
    <property type="entry name" value="H82080"/>
</dbReference>
<dbReference type="RefSeq" id="NP_232026.1">
    <property type="nucleotide sequence ID" value="NC_002505.1"/>
</dbReference>
<dbReference type="RefSeq" id="WP_000621097.1">
    <property type="nucleotide sequence ID" value="NZ_LT906614.1"/>
</dbReference>
<dbReference type="SMR" id="Q9KPH2"/>
<dbReference type="STRING" id="243277.VC_2396"/>
<dbReference type="DNASU" id="2613065"/>
<dbReference type="EnsemblBacteria" id="AAF95539">
    <property type="protein sequence ID" value="AAF95539"/>
    <property type="gene ID" value="VC_2396"/>
</dbReference>
<dbReference type="GeneID" id="88783207"/>
<dbReference type="KEGG" id="vch:VC_2396"/>
<dbReference type="PATRIC" id="fig|243277.26.peg.2281"/>
<dbReference type="eggNOG" id="COG0774">
    <property type="taxonomic scope" value="Bacteria"/>
</dbReference>
<dbReference type="HOGENOM" id="CLU_046528_1_0_6"/>
<dbReference type="BioCyc" id="MetaCyc:FY484_RS11915-MONOMER"/>
<dbReference type="UniPathway" id="UPA00359">
    <property type="reaction ID" value="UER00478"/>
</dbReference>
<dbReference type="Proteomes" id="UP000000584">
    <property type="component" value="Chromosome 1"/>
</dbReference>
<dbReference type="GO" id="GO:0016020">
    <property type="term" value="C:membrane"/>
    <property type="evidence" value="ECO:0007669"/>
    <property type="project" value="GOC"/>
</dbReference>
<dbReference type="GO" id="GO:0046872">
    <property type="term" value="F:metal ion binding"/>
    <property type="evidence" value="ECO:0007669"/>
    <property type="project" value="UniProtKB-KW"/>
</dbReference>
<dbReference type="GO" id="GO:0103117">
    <property type="term" value="F:UDP-3-O-acyl-N-acetylglucosamine deacetylase activity"/>
    <property type="evidence" value="ECO:0007669"/>
    <property type="project" value="UniProtKB-UniRule"/>
</dbReference>
<dbReference type="GO" id="GO:0009245">
    <property type="term" value="P:lipid A biosynthetic process"/>
    <property type="evidence" value="ECO:0007669"/>
    <property type="project" value="UniProtKB-UniRule"/>
</dbReference>
<dbReference type="FunFam" id="3.30.1700.10:FF:000001">
    <property type="entry name" value="UDP-3-O-acyl-N-acetylglucosamine deacetylase"/>
    <property type="match status" value="1"/>
</dbReference>
<dbReference type="FunFam" id="3.30.230.20:FF:000001">
    <property type="entry name" value="UDP-3-O-acyl-N-acetylglucosamine deacetylase"/>
    <property type="match status" value="1"/>
</dbReference>
<dbReference type="Gene3D" id="3.30.230.20">
    <property type="entry name" value="lpxc deacetylase, domain 1"/>
    <property type="match status" value="1"/>
</dbReference>
<dbReference type="Gene3D" id="3.30.1700.10">
    <property type="entry name" value="lpxc deacetylase, domain 2"/>
    <property type="match status" value="1"/>
</dbReference>
<dbReference type="HAMAP" id="MF_00388">
    <property type="entry name" value="LpxC"/>
    <property type="match status" value="1"/>
</dbReference>
<dbReference type="InterPro" id="IPR020568">
    <property type="entry name" value="Ribosomal_Su5_D2-typ_SF"/>
</dbReference>
<dbReference type="InterPro" id="IPR004463">
    <property type="entry name" value="UDP-acyl_GlcNac_deAcase"/>
</dbReference>
<dbReference type="InterPro" id="IPR011334">
    <property type="entry name" value="UDP-acyl_GlcNac_deAcase_C"/>
</dbReference>
<dbReference type="InterPro" id="IPR015870">
    <property type="entry name" value="UDP-acyl_N-AcGlcN_deAcase_N"/>
</dbReference>
<dbReference type="NCBIfam" id="TIGR00325">
    <property type="entry name" value="lpxC"/>
    <property type="match status" value="1"/>
</dbReference>
<dbReference type="PANTHER" id="PTHR33694">
    <property type="entry name" value="UDP-3-O-ACYL-N-ACETYLGLUCOSAMINE DEACETYLASE 1, MITOCHONDRIAL-RELATED"/>
    <property type="match status" value="1"/>
</dbReference>
<dbReference type="PANTHER" id="PTHR33694:SF1">
    <property type="entry name" value="UDP-3-O-ACYL-N-ACETYLGLUCOSAMINE DEACETYLASE 1, MITOCHONDRIAL-RELATED"/>
    <property type="match status" value="1"/>
</dbReference>
<dbReference type="Pfam" id="PF03331">
    <property type="entry name" value="LpxC"/>
    <property type="match status" value="1"/>
</dbReference>
<dbReference type="SUPFAM" id="SSF54211">
    <property type="entry name" value="Ribosomal protein S5 domain 2-like"/>
    <property type="match status" value="2"/>
</dbReference>
<keyword id="KW-0378">Hydrolase</keyword>
<keyword id="KW-0441">Lipid A biosynthesis</keyword>
<keyword id="KW-0444">Lipid biosynthesis</keyword>
<keyword id="KW-0443">Lipid metabolism</keyword>
<keyword id="KW-0479">Metal-binding</keyword>
<keyword id="KW-1185">Reference proteome</keyword>
<keyword id="KW-0862">Zinc</keyword>
<protein>
    <recommendedName>
        <fullName evidence="1">UDP-3-O-acyl-N-acetylglucosamine deacetylase</fullName>
        <shortName evidence="1">UDP-3-O-acyl-GlcNAc deacetylase</shortName>
        <ecNumber evidence="1">3.5.1.108</ecNumber>
    </recommendedName>
    <alternativeName>
        <fullName evidence="1">UDP-3-O-[R-3-hydroxymyristoyl]-N-acetylglucosamine deacetylase</fullName>
    </alternativeName>
</protein>
<organism>
    <name type="scientific">Vibrio cholerae serotype O1 (strain ATCC 39315 / El Tor Inaba N16961)</name>
    <dbReference type="NCBI Taxonomy" id="243277"/>
    <lineage>
        <taxon>Bacteria</taxon>
        <taxon>Pseudomonadati</taxon>
        <taxon>Pseudomonadota</taxon>
        <taxon>Gammaproteobacteria</taxon>
        <taxon>Vibrionales</taxon>
        <taxon>Vibrionaceae</taxon>
        <taxon>Vibrio</taxon>
    </lineage>
</organism>
<name>LPXC_VIBCH</name>
<evidence type="ECO:0000255" key="1">
    <source>
        <dbReference type="HAMAP-Rule" id="MF_00388"/>
    </source>
</evidence>
<proteinExistence type="inferred from homology"/>
<comment type="function">
    <text evidence="1">Catalyzes the hydrolysis of UDP-3-O-myristoyl-N-acetylglucosamine to form UDP-3-O-myristoylglucosamine and acetate, the committed step in lipid A biosynthesis.</text>
</comment>
<comment type="catalytic activity">
    <reaction evidence="1">
        <text>a UDP-3-O-[(3R)-3-hydroxyacyl]-N-acetyl-alpha-D-glucosamine + H2O = a UDP-3-O-[(3R)-3-hydroxyacyl]-alpha-D-glucosamine + acetate</text>
        <dbReference type="Rhea" id="RHEA:67816"/>
        <dbReference type="ChEBI" id="CHEBI:15377"/>
        <dbReference type="ChEBI" id="CHEBI:30089"/>
        <dbReference type="ChEBI" id="CHEBI:137740"/>
        <dbReference type="ChEBI" id="CHEBI:173225"/>
        <dbReference type="EC" id="3.5.1.108"/>
    </reaction>
</comment>
<comment type="cofactor">
    <cofactor evidence="1">
        <name>Zn(2+)</name>
        <dbReference type="ChEBI" id="CHEBI:29105"/>
    </cofactor>
</comment>
<comment type="pathway">
    <text evidence="1">Glycolipid biosynthesis; lipid IV(A) biosynthesis; lipid IV(A) from (3R)-3-hydroxytetradecanoyl-[acyl-carrier-protein] and UDP-N-acetyl-alpha-D-glucosamine: step 2/6.</text>
</comment>
<comment type="similarity">
    <text evidence="1">Belongs to the LpxC family.</text>
</comment>
<sequence length="305" mass="33968">MIRQRTLKEIVKTTGVGLHSGRKVTLTLRPAAANTGIIYRRTDVNPPVDFPADPASVRDTMLCTALVNDQGVRISTVEHLNAALAGMGIDNAIIEVDAPEIPIMDGSASPFVYLLQQAGIQTLNAPKRFIRIKKPVRIEDGDKWAEFVPFNGFRMDFEIEFNHPAIDGDDQRLVFDFSSQGFVKEISRARTFGFMRDIEYLQSQNLCLGGSFDCAIVLDDYRILNEEGLRFDNEFVTHKVLDAIGDLYMAGHAIVGEFRAYKSGHGLNNQLLRAVLADQEAWEWATFEEEVGSPVAFAEPNMVLA</sequence>
<feature type="chain" id="PRO_0000191961" description="UDP-3-O-acyl-N-acetylglucosamine deacetylase">
    <location>
        <begin position="1"/>
        <end position="305"/>
    </location>
</feature>
<feature type="active site" description="Proton donor" evidence="1">
    <location>
        <position position="265"/>
    </location>
</feature>
<feature type="binding site" evidence="1">
    <location>
        <position position="79"/>
    </location>
    <ligand>
        <name>Zn(2+)</name>
        <dbReference type="ChEBI" id="CHEBI:29105"/>
    </ligand>
</feature>
<feature type="binding site" evidence="1">
    <location>
        <position position="238"/>
    </location>
    <ligand>
        <name>Zn(2+)</name>
        <dbReference type="ChEBI" id="CHEBI:29105"/>
    </ligand>
</feature>
<feature type="binding site" evidence="1">
    <location>
        <position position="242"/>
    </location>
    <ligand>
        <name>Zn(2+)</name>
        <dbReference type="ChEBI" id="CHEBI:29105"/>
    </ligand>
</feature>